<proteinExistence type="inferred from homology"/>
<sequence length="82" mass="8895">MENGATSQSEGKDPSGFLSEIIGNPVTVKLNSGVVYKGELQSVDGYMNIALEKTEEFINGVKRRSYGDAFVRGNNVMYISAD</sequence>
<evidence type="ECO:0000250" key="1"/>
<evidence type="ECO:0000255" key="2">
    <source>
        <dbReference type="PROSITE-ProRule" id="PRU01346"/>
    </source>
</evidence>
<evidence type="ECO:0000305" key="3"/>
<name>LSM6_NEUCR</name>
<keyword id="KW-0963">Cytoplasm</keyword>
<keyword id="KW-0507">mRNA processing</keyword>
<keyword id="KW-0508">mRNA splicing</keyword>
<keyword id="KW-0539">Nucleus</keyword>
<keyword id="KW-1185">Reference proteome</keyword>
<keyword id="KW-0687">Ribonucleoprotein</keyword>
<keyword id="KW-0694">RNA-binding</keyword>
<keyword id="KW-0698">rRNA processing</keyword>
<keyword id="KW-0747">Spliceosome</keyword>
<keyword id="KW-0819">tRNA processing</keyword>
<organism>
    <name type="scientific">Neurospora crassa (strain ATCC 24698 / 74-OR23-1A / CBS 708.71 / DSM 1257 / FGSC 987)</name>
    <dbReference type="NCBI Taxonomy" id="367110"/>
    <lineage>
        <taxon>Eukaryota</taxon>
        <taxon>Fungi</taxon>
        <taxon>Dikarya</taxon>
        <taxon>Ascomycota</taxon>
        <taxon>Pezizomycotina</taxon>
        <taxon>Sordariomycetes</taxon>
        <taxon>Sordariomycetidae</taxon>
        <taxon>Sordariales</taxon>
        <taxon>Sordariaceae</taxon>
        <taxon>Neurospora</taxon>
    </lineage>
</organism>
<reference key="1">
    <citation type="journal article" date="2003" name="Nature">
        <title>The genome sequence of the filamentous fungus Neurospora crassa.</title>
        <authorList>
            <person name="Galagan J.E."/>
            <person name="Calvo S.E."/>
            <person name="Borkovich K.A."/>
            <person name="Selker E.U."/>
            <person name="Read N.D."/>
            <person name="Jaffe D.B."/>
            <person name="FitzHugh W."/>
            <person name="Ma L.-J."/>
            <person name="Smirnov S."/>
            <person name="Purcell S."/>
            <person name="Rehman B."/>
            <person name="Elkins T."/>
            <person name="Engels R."/>
            <person name="Wang S."/>
            <person name="Nielsen C.B."/>
            <person name="Butler J."/>
            <person name="Endrizzi M."/>
            <person name="Qui D."/>
            <person name="Ianakiev P."/>
            <person name="Bell-Pedersen D."/>
            <person name="Nelson M.A."/>
            <person name="Werner-Washburne M."/>
            <person name="Selitrennikoff C.P."/>
            <person name="Kinsey J.A."/>
            <person name="Braun E.L."/>
            <person name="Zelter A."/>
            <person name="Schulte U."/>
            <person name="Kothe G.O."/>
            <person name="Jedd G."/>
            <person name="Mewes H.-W."/>
            <person name="Staben C."/>
            <person name="Marcotte E."/>
            <person name="Greenberg D."/>
            <person name="Roy A."/>
            <person name="Foley K."/>
            <person name="Naylor J."/>
            <person name="Stange-Thomann N."/>
            <person name="Barrett R."/>
            <person name="Gnerre S."/>
            <person name="Kamal M."/>
            <person name="Kamvysselis M."/>
            <person name="Mauceli E.W."/>
            <person name="Bielke C."/>
            <person name="Rudd S."/>
            <person name="Frishman D."/>
            <person name="Krystofova S."/>
            <person name="Rasmussen C."/>
            <person name="Metzenberg R.L."/>
            <person name="Perkins D.D."/>
            <person name="Kroken S."/>
            <person name="Cogoni C."/>
            <person name="Macino G."/>
            <person name="Catcheside D.E.A."/>
            <person name="Li W."/>
            <person name="Pratt R.J."/>
            <person name="Osmani S.A."/>
            <person name="DeSouza C.P.C."/>
            <person name="Glass N.L."/>
            <person name="Orbach M.J."/>
            <person name="Berglund J.A."/>
            <person name="Voelker R."/>
            <person name="Yarden O."/>
            <person name="Plamann M."/>
            <person name="Seiler S."/>
            <person name="Dunlap J.C."/>
            <person name="Radford A."/>
            <person name="Aramayo R."/>
            <person name="Natvig D.O."/>
            <person name="Alex L.A."/>
            <person name="Mannhaupt G."/>
            <person name="Ebbole D.J."/>
            <person name="Freitag M."/>
            <person name="Paulsen I."/>
            <person name="Sachs M.S."/>
            <person name="Lander E.S."/>
            <person name="Nusbaum C."/>
            <person name="Birren B.W."/>
        </authorList>
    </citation>
    <scope>NUCLEOTIDE SEQUENCE [LARGE SCALE GENOMIC DNA]</scope>
    <source>
        <strain>ATCC 24698 / 74-OR23-1A / CBS 708.71 / DSM 1257 / FGSC 987</strain>
    </source>
</reference>
<accession>A7UXE4</accession>
<dbReference type="EMBL" id="CM002236">
    <property type="protein sequence ID" value="EDO64904.2"/>
    <property type="molecule type" value="Genomic_DNA"/>
</dbReference>
<dbReference type="RefSeq" id="XP_001727995.2">
    <property type="nucleotide sequence ID" value="XM_001727943.2"/>
</dbReference>
<dbReference type="SMR" id="A7UXE4"/>
<dbReference type="FunCoup" id="A7UXE4">
    <property type="interactions" value="774"/>
</dbReference>
<dbReference type="STRING" id="367110.A7UXE4"/>
<dbReference type="PaxDb" id="5141-EFNCRP00000009453"/>
<dbReference type="EnsemblFungi" id="EDO64904">
    <property type="protein sequence ID" value="EDO64904"/>
    <property type="gene ID" value="NCU10352"/>
</dbReference>
<dbReference type="GeneID" id="5847034"/>
<dbReference type="KEGG" id="ncr:NCU10352"/>
<dbReference type="VEuPathDB" id="FungiDB:NCU10352"/>
<dbReference type="HOGENOM" id="CLU_076902_7_4_1"/>
<dbReference type="InParanoid" id="A7UXE4"/>
<dbReference type="OrthoDB" id="268799at2759"/>
<dbReference type="Proteomes" id="UP000001805">
    <property type="component" value="Chromosome 1, Linkage Group I"/>
</dbReference>
<dbReference type="GO" id="GO:1990726">
    <property type="term" value="C:Lsm1-7-Pat1 complex"/>
    <property type="evidence" value="ECO:0007669"/>
    <property type="project" value="EnsemblFungi"/>
</dbReference>
<dbReference type="GO" id="GO:0005730">
    <property type="term" value="C:nucleolus"/>
    <property type="evidence" value="ECO:0000318"/>
    <property type="project" value="GO_Central"/>
</dbReference>
<dbReference type="GO" id="GO:0000932">
    <property type="term" value="C:P-body"/>
    <property type="evidence" value="ECO:0000318"/>
    <property type="project" value="GO_Central"/>
</dbReference>
<dbReference type="GO" id="GO:0005732">
    <property type="term" value="C:sno(s)RNA-containing ribonucleoprotein complex"/>
    <property type="evidence" value="ECO:0000318"/>
    <property type="project" value="GO_Central"/>
</dbReference>
<dbReference type="GO" id="GO:0005681">
    <property type="term" value="C:spliceosomal complex"/>
    <property type="evidence" value="ECO:0007669"/>
    <property type="project" value="UniProtKB-KW"/>
</dbReference>
<dbReference type="GO" id="GO:0046540">
    <property type="term" value="C:U4/U6 x U5 tri-snRNP complex"/>
    <property type="evidence" value="ECO:0000318"/>
    <property type="project" value="GO_Central"/>
</dbReference>
<dbReference type="GO" id="GO:0005688">
    <property type="term" value="C:U6 snRNP"/>
    <property type="evidence" value="ECO:0000318"/>
    <property type="project" value="GO_Central"/>
</dbReference>
<dbReference type="GO" id="GO:0003723">
    <property type="term" value="F:RNA binding"/>
    <property type="evidence" value="ECO:0000318"/>
    <property type="project" value="GO_Central"/>
</dbReference>
<dbReference type="GO" id="GO:0000290">
    <property type="term" value="P:deadenylation-dependent decapping of nuclear-transcribed mRNA"/>
    <property type="evidence" value="ECO:0007669"/>
    <property type="project" value="EnsemblFungi"/>
</dbReference>
<dbReference type="GO" id="GO:0030490">
    <property type="term" value="P:maturation of SSU-rRNA"/>
    <property type="evidence" value="ECO:0000318"/>
    <property type="project" value="GO_Central"/>
</dbReference>
<dbReference type="GO" id="GO:0000398">
    <property type="term" value="P:mRNA splicing, via spliceosome"/>
    <property type="evidence" value="ECO:0000318"/>
    <property type="project" value="GO_Central"/>
</dbReference>
<dbReference type="GO" id="GO:0008033">
    <property type="term" value="P:tRNA processing"/>
    <property type="evidence" value="ECO:0007669"/>
    <property type="project" value="UniProtKB-KW"/>
</dbReference>
<dbReference type="CDD" id="cd01726">
    <property type="entry name" value="LSm6"/>
    <property type="match status" value="1"/>
</dbReference>
<dbReference type="FunFam" id="2.30.30.100:FF:000037">
    <property type="entry name" value="U6 snRNA-associated Sm-like protein LSm6"/>
    <property type="match status" value="1"/>
</dbReference>
<dbReference type="Gene3D" id="2.30.30.100">
    <property type="match status" value="1"/>
</dbReference>
<dbReference type="InterPro" id="IPR016487">
    <property type="entry name" value="Lsm6/sSmF"/>
</dbReference>
<dbReference type="InterPro" id="IPR010920">
    <property type="entry name" value="LSM_dom_sf"/>
</dbReference>
<dbReference type="InterPro" id="IPR047575">
    <property type="entry name" value="Sm"/>
</dbReference>
<dbReference type="InterPro" id="IPR001163">
    <property type="entry name" value="Sm_dom_euk/arc"/>
</dbReference>
<dbReference type="PANTHER" id="PTHR11021">
    <property type="entry name" value="SMALL NUCLEAR RIBONUCLEOPROTEIN F SNRNP-F"/>
    <property type="match status" value="1"/>
</dbReference>
<dbReference type="PANTHER" id="PTHR11021:SF1">
    <property type="entry name" value="U6 SNRNA-ASSOCIATED SM-LIKE PROTEIN LSM6"/>
    <property type="match status" value="1"/>
</dbReference>
<dbReference type="Pfam" id="PF01423">
    <property type="entry name" value="LSM"/>
    <property type="match status" value="1"/>
</dbReference>
<dbReference type="PIRSF" id="PIRSF006609">
    <property type="entry name" value="snRNP_SmF"/>
    <property type="match status" value="1"/>
</dbReference>
<dbReference type="SMART" id="SM00651">
    <property type="entry name" value="Sm"/>
    <property type="match status" value="1"/>
</dbReference>
<dbReference type="SUPFAM" id="SSF50182">
    <property type="entry name" value="Sm-like ribonucleoproteins"/>
    <property type="match status" value="1"/>
</dbReference>
<dbReference type="PROSITE" id="PS52002">
    <property type="entry name" value="SM"/>
    <property type="match status" value="1"/>
</dbReference>
<protein>
    <recommendedName>
        <fullName>U6 snRNA-associated Sm-like protein LSm6</fullName>
    </recommendedName>
    <alternativeName>
        <fullName>Small nuclear RNA-associated protein 6</fullName>
    </alternativeName>
</protein>
<feature type="chain" id="PRO_0000333602" description="U6 snRNA-associated Sm-like protein LSm6">
    <location>
        <begin position="1"/>
        <end position="82"/>
    </location>
</feature>
<feature type="domain" description="Sm" evidence="2">
    <location>
        <begin position="13"/>
        <end position="82"/>
    </location>
</feature>
<gene>
    <name type="primary">snr-6</name>
    <name type="synonym">lsm6</name>
    <name type="ORF">NCU10352</name>
</gene>
<comment type="function">
    <text evidence="1">Component of LSm protein complexes, which are involved in RNA processing and may function in a chaperone-like manner, facilitating the efficient association of RNA processing factors with their substrates. Component of the cytoplasmic LSM1-LSM7 complex, which is thought to be involved in mRNA degradation by activating the decapping step in the 5'-to-3' mRNA decay pathway. Component of the nuclear LSM2-LSM8 complex, which is involved in splicing of nuclear mRNAs. LSM2-LSM8 associates with multiple snRNP complexes containing the U6 snRNA (U4/U6 di-snRNP, spliceosomal U4/U6.U5 tri-snRNP, and free U6 snRNP). It binds directly to the 3'-terminal U-tract of U6 snRNA and plays a role in the biogenesis and stability of the U6 snRNP and U4/U6 snRNP complexes. LSM2-LSM8 probably also is involved degradation of nuclear pre-mRNA by targeting them for decapping, and in processing of pre-tRNAs, pre-rRNAs and U3 snoRNA (By similarity).</text>
</comment>
<comment type="subunit">
    <text evidence="1">Component of the heptameric LSM1-LSM7 complex, which consists of snr-1/lsm1, snr-2/lsm2, snr-3/lsm3, snr-4/lsm4, snr-5/lsm5, snr-6/lsm6 and snr-7/lsm7. Component of the heptameric LSM2-LSM8 complex, which consists of snr-2/lsm2, snr-3/lsm3, snr-4/lsm4, snr-5/lsm5, snr-6/lsm6, snr-7/lsm7 and snr-8/lsm8. The LSm subunits form a seven-membered ring structure with a doughnut shape (By similarity).</text>
</comment>
<comment type="subcellular location">
    <subcellularLocation>
        <location evidence="1">Cytoplasm</location>
    </subcellularLocation>
    <subcellularLocation>
        <location evidence="1">Nucleus</location>
    </subcellularLocation>
</comment>
<comment type="similarity">
    <text evidence="3">Belongs to the snRNP Sm proteins family. SmF/LSm6 subfamily.</text>
</comment>